<protein>
    <recommendedName>
        <fullName evidence="1">Adenine phosphoribosyltransferase</fullName>
        <shortName evidence="1">APRT</shortName>
        <ecNumber evidence="1">2.4.2.7</ecNumber>
    </recommendedName>
</protein>
<organism>
    <name type="scientific">Escherichia fergusonii (strain ATCC 35469 / DSM 13698 / CCUG 18766 / IAM 14443 / JCM 21226 / LMG 7866 / NBRC 102419 / NCTC 12128 / CDC 0568-73)</name>
    <dbReference type="NCBI Taxonomy" id="585054"/>
    <lineage>
        <taxon>Bacteria</taxon>
        <taxon>Pseudomonadati</taxon>
        <taxon>Pseudomonadota</taxon>
        <taxon>Gammaproteobacteria</taxon>
        <taxon>Enterobacterales</taxon>
        <taxon>Enterobacteriaceae</taxon>
        <taxon>Escherichia</taxon>
    </lineage>
</organism>
<sequence>MTATAQQLEYLKNSIKSIQDYPKPGILFRDVTSLLEDPKAYALSIDLLVERYKNAGITKVVGTEARGFLFGAPVALGLGVGFVPVRKPGKLPRETISETYDLEYGTDQLEIHVDAIKPGDKVLVVDDLLATGGTIEATVKLIRRLGGEVTDAAFIINLFDLGGEQRLEKQGITSYSLVPFPGH</sequence>
<evidence type="ECO:0000255" key="1">
    <source>
        <dbReference type="HAMAP-Rule" id="MF_00004"/>
    </source>
</evidence>
<dbReference type="EC" id="2.4.2.7" evidence="1"/>
<dbReference type="EMBL" id="CU928158">
    <property type="protein sequence ID" value="CAQ90043.1"/>
    <property type="molecule type" value="Genomic_DNA"/>
</dbReference>
<dbReference type="RefSeq" id="WP_002431408.1">
    <property type="nucleotide sequence ID" value="NC_011740.1"/>
</dbReference>
<dbReference type="SMR" id="B7LLQ1"/>
<dbReference type="GeneID" id="75056421"/>
<dbReference type="KEGG" id="efe:EFER_2548"/>
<dbReference type="HOGENOM" id="CLU_063339_3_0_6"/>
<dbReference type="OrthoDB" id="9803963at2"/>
<dbReference type="UniPathway" id="UPA00588">
    <property type="reaction ID" value="UER00646"/>
</dbReference>
<dbReference type="Proteomes" id="UP000000745">
    <property type="component" value="Chromosome"/>
</dbReference>
<dbReference type="GO" id="GO:0005737">
    <property type="term" value="C:cytoplasm"/>
    <property type="evidence" value="ECO:0007669"/>
    <property type="project" value="UniProtKB-SubCell"/>
</dbReference>
<dbReference type="GO" id="GO:0002055">
    <property type="term" value="F:adenine binding"/>
    <property type="evidence" value="ECO:0007669"/>
    <property type="project" value="TreeGrafter"/>
</dbReference>
<dbReference type="GO" id="GO:0003999">
    <property type="term" value="F:adenine phosphoribosyltransferase activity"/>
    <property type="evidence" value="ECO:0007669"/>
    <property type="project" value="UniProtKB-UniRule"/>
</dbReference>
<dbReference type="GO" id="GO:0016208">
    <property type="term" value="F:AMP binding"/>
    <property type="evidence" value="ECO:0007669"/>
    <property type="project" value="TreeGrafter"/>
</dbReference>
<dbReference type="GO" id="GO:0006168">
    <property type="term" value="P:adenine salvage"/>
    <property type="evidence" value="ECO:0007669"/>
    <property type="project" value="InterPro"/>
</dbReference>
<dbReference type="GO" id="GO:0044209">
    <property type="term" value="P:AMP salvage"/>
    <property type="evidence" value="ECO:0007669"/>
    <property type="project" value="UniProtKB-UniRule"/>
</dbReference>
<dbReference type="GO" id="GO:0006166">
    <property type="term" value="P:purine ribonucleoside salvage"/>
    <property type="evidence" value="ECO:0007669"/>
    <property type="project" value="UniProtKB-KW"/>
</dbReference>
<dbReference type="CDD" id="cd06223">
    <property type="entry name" value="PRTases_typeI"/>
    <property type="match status" value="1"/>
</dbReference>
<dbReference type="FunFam" id="3.40.50.2020:FF:000004">
    <property type="entry name" value="Adenine phosphoribosyltransferase"/>
    <property type="match status" value="1"/>
</dbReference>
<dbReference type="Gene3D" id="3.40.50.2020">
    <property type="match status" value="1"/>
</dbReference>
<dbReference type="HAMAP" id="MF_00004">
    <property type="entry name" value="Aden_phosphoribosyltr"/>
    <property type="match status" value="1"/>
</dbReference>
<dbReference type="InterPro" id="IPR005764">
    <property type="entry name" value="Ade_phspho_trans"/>
</dbReference>
<dbReference type="InterPro" id="IPR000836">
    <property type="entry name" value="PRibTrfase_dom"/>
</dbReference>
<dbReference type="InterPro" id="IPR029057">
    <property type="entry name" value="PRTase-like"/>
</dbReference>
<dbReference type="InterPro" id="IPR050054">
    <property type="entry name" value="UPRTase/APRTase"/>
</dbReference>
<dbReference type="NCBIfam" id="TIGR01090">
    <property type="entry name" value="apt"/>
    <property type="match status" value="1"/>
</dbReference>
<dbReference type="NCBIfam" id="NF002632">
    <property type="entry name" value="PRK02304.1-1"/>
    <property type="match status" value="1"/>
</dbReference>
<dbReference type="NCBIfam" id="NF002633">
    <property type="entry name" value="PRK02304.1-2"/>
    <property type="match status" value="1"/>
</dbReference>
<dbReference type="NCBIfam" id="NF002634">
    <property type="entry name" value="PRK02304.1-3"/>
    <property type="match status" value="1"/>
</dbReference>
<dbReference type="NCBIfam" id="NF002636">
    <property type="entry name" value="PRK02304.1-5"/>
    <property type="match status" value="1"/>
</dbReference>
<dbReference type="PANTHER" id="PTHR32315">
    <property type="entry name" value="ADENINE PHOSPHORIBOSYLTRANSFERASE"/>
    <property type="match status" value="1"/>
</dbReference>
<dbReference type="PANTHER" id="PTHR32315:SF3">
    <property type="entry name" value="ADENINE PHOSPHORIBOSYLTRANSFERASE"/>
    <property type="match status" value="1"/>
</dbReference>
<dbReference type="Pfam" id="PF00156">
    <property type="entry name" value="Pribosyltran"/>
    <property type="match status" value="1"/>
</dbReference>
<dbReference type="SUPFAM" id="SSF53271">
    <property type="entry name" value="PRTase-like"/>
    <property type="match status" value="1"/>
</dbReference>
<dbReference type="PROSITE" id="PS00103">
    <property type="entry name" value="PUR_PYR_PR_TRANSFER"/>
    <property type="match status" value="1"/>
</dbReference>
<reference key="1">
    <citation type="journal article" date="2009" name="PLoS Genet.">
        <title>Organised genome dynamics in the Escherichia coli species results in highly diverse adaptive paths.</title>
        <authorList>
            <person name="Touchon M."/>
            <person name="Hoede C."/>
            <person name="Tenaillon O."/>
            <person name="Barbe V."/>
            <person name="Baeriswyl S."/>
            <person name="Bidet P."/>
            <person name="Bingen E."/>
            <person name="Bonacorsi S."/>
            <person name="Bouchier C."/>
            <person name="Bouvet O."/>
            <person name="Calteau A."/>
            <person name="Chiapello H."/>
            <person name="Clermont O."/>
            <person name="Cruveiller S."/>
            <person name="Danchin A."/>
            <person name="Diard M."/>
            <person name="Dossat C."/>
            <person name="Karoui M.E."/>
            <person name="Frapy E."/>
            <person name="Garry L."/>
            <person name="Ghigo J.M."/>
            <person name="Gilles A.M."/>
            <person name="Johnson J."/>
            <person name="Le Bouguenec C."/>
            <person name="Lescat M."/>
            <person name="Mangenot S."/>
            <person name="Martinez-Jehanne V."/>
            <person name="Matic I."/>
            <person name="Nassif X."/>
            <person name="Oztas S."/>
            <person name="Petit M.A."/>
            <person name="Pichon C."/>
            <person name="Rouy Z."/>
            <person name="Ruf C.S."/>
            <person name="Schneider D."/>
            <person name="Tourret J."/>
            <person name="Vacherie B."/>
            <person name="Vallenet D."/>
            <person name="Medigue C."/>
            <person name="Rocha E.P.C."/>
            <person name="Denamur E."/>
        </authorList>
    </citation>
    <scope>NUCLEOTIDE SEQUENCE [LARGE SCALE GENOMIC DNA]</scope>
    <source>
        <strain>ATCC 35469 / DSM 13698 / BCRC 15582 / CCUG 18766 / IAM 14443 / JCM 21226 / LMG 7866 / NBRC 102419 / NCTC 12128 / CDC 0568-73</strain>
    </source>
</reference>
<name>APT_ESCF3</name>
<proteinExistence type="inferred from homology"/>
<feature type="chain" id="PRO_1000116176" description="Adenine phosphoribosyltransferase">
    <location>
        <begin position="1"/>
        <end position="183"/>
    </location>
</feature>
<accession>B7LLQ1</accession>
<gene>
    <name evidence="1" type="primary">apt</name>
    <name type="ordered locus">EFER_2548</name>
</gene>
<keyword id="KW-0963">Cytoplasm</keyword>
<keyword id="KW-0328">Glycosyltransferase</keyword>
<keyword id="KW-0660">Purine salvage</keyword>
<keyword id="KW-0808">Transferase</keyword>
<comment type="function">
    <text evidence="1">Catalyzes a salvage reaction resulting in the formation of AMP, that is energically less costly than de novo synthesis.</text>
</comment>
<comment type="catalytic activity">
    <reaction evidence="1">
        <text>AMP + diphosphate = 5-phospho-alpha-D-ribose 1-diphosphate + adenine</text>
        <dbReference type="Rhea" id="RHEA:16609"/>
        <dbReference type="ChEBI" id="CHEBI:16708"/>
        <dbReference type="ChEBI" id="CHEBI:33019"/>
        <dbReference type="ChEBI" id="CHEBI:58017"/>
        <dbReference type="ChEBI" id="CHEBI:456215"/>
        <dbReference type="EC" id="2.4.2.7"/>
    </reaction>
</comment>
<comment type="pathway">
    <text evidence="1">Purine metabolism; AMP biosynthesis via salvage pathway; AMP from adenine: step 1/1.</text>
</comment>
<comment type="subunit">
    <text evidence="1">Homodimer.</text>
</comment>
<comment type="subcellular location">
    <subcellularLocation>
        <location evidence="1">Cytoplasm</location>
    </subcellularLocation>
</comment>
<comment type="similarity">
    <text evidence="1">Belongs to the purine/pyrimidine phosphoribosyltransferase family.</text>
</comment>